<keyword id="KW-0963">Cytoplasm</keyword>
<keyword id="KW-0444">Lipid biosynthesis</keyword>
<keyword id="KW-0443">Lipid metabolism</keyword>
<keyword id="KW-0479">Metal-binding</keyword>
<keyword id="KW-0520">NAD</keyword>
<keyword id="KW-0521">NADP</keyword>
<keyword id="KW-0560">Oxidoreductase</keyword>
<keyword id="KW-0594">Phospholipid biosynthesis</keyword>
<keyword id="KW-1208">Phospholipid metabolism</keyword>
<keyword id="KW-1185">Reference proteome</keyword>
<keyword id="KW-0862">Zinc</keyword>
<name>G1PDH_HALWD</name>
<evidence type="ECO:0000255" key="1">
    <source>
        <dbReference type="HAMAP-Rule" id="MF_00497"/>
    </source>
</evidence>
<sequence length="348" mass="36477">MLKKTTWIKLPRNVLVGHDVIGDLAAAIEELYLDGRPLIVTSPTPDQLIGNRVRSQFADPQTVSVDHASFDAVEAVIDTAKATDAGYLIGLGGGKPIDTAKMASDRLGCGFVSVPTAASHDGIVSGRSSIPEGDTRHSVAADPPLAVVADTAVLAEAPWELTTAGCADIISNYTAVKDWQLAHRLQDVEYSEYAGALSQMTAEMLVDNSDAIKQGFEESAWLVAKALVSSGVAMSIAGSSRPASGAEHLISHQLDRLVPDAALHGHQVGVASIVTAYLHTGENGEWEDIRAALADVGAPTTATELGIDEEIFIQAITSAHAIRDRHTILGNGVSEAAAREAAVFTDVC</sequence>
<dbReference type="EC" id="1.1.1.261" evidence="1"/>
<dbReference type="EMBL" id="AM180088">
    <property type="protein sequence ID" value="CAJ51688.1"/>
    <property type="molecule type" value="Genomic_DNA"/>
</dbReference>
<dbReference type="RefSeq" id="WP_011570840.1">
    <property type="nucleotide sequence ID" value="NC_008212.1"/>
</dbReference>
<dbReference type="SMR" id="Q18JW6"/>
<dbReference type="STRING" id="362976.HQ_1560A"/>
<dbReference type="GeneID" id="4194032"/>
<dbReference type="KEGG" id="hwa:HQ_1560A"/>
<dbReference type="eggNOG" id="arCOG00982">
    <property type="taxonomic scope" value="Archaea"/>
</dbReference>
<dbReference type="HOGENOM" id="CLU_038362_0_0_2"/>
<dbReference type="UniPathway" id="UPA00940"/>
<dbReference type="Proteomes" id="UP000001975">
    <property type="component" value="Chromosome"/>
</dbReference>
<dbReference type="GO" id="GO:0005737">
    <property type="term" value="C:cytoplasm"/>
    <property type="evidence" value="ECO:0007669"/>
    <property type="project" value="UniProtKB-SubCell"/>
</dbReference>
<dbReference type="GO" id="GO:0106357">
    <property type="term" value="F:glycerol-1-phosphate dehydrogenase (NAD+) activity"/>
    <property type="evidence" value="ECO:0007669"/>
    <property type="project" value="RHEA"/>
</dbReference>
<dbReference type="GO" id="GO:0106358">
    <property type="term" value="F:glycerol-1-phosphate dehydrogenase (NADP+) activity"/>
    <property type="evidence" value="ECO:0007669"/>
    <property type="project" value="RHEA"/>
</dbReference>
<dbReference type="GO" id="GO:0046872">
    <property type="term" value="F:metal ion binding"/>
    <property type="evidence" value="ECO:0007669"/>
    <property type="project" value="UniProtKB-KW"/>
</dbReference>
<dbReference type="GO" id="GO:0006650">
    <property type="term" value="P:glycerophospholipid metabolic process"/>
    <property type="evidence" value="ECO:0007669"/>
    <property type="project" value="UniProtKB-UniRule"/>
</dbReference>
<dbReference type="GO" id="GO:0008654">
    <property type="term" value="P:phospholipid biosynthetic process"/>
    <property type="evidence" value="ECO:0007669"/>
    <property type="project" value="UniProtKB-KW"/>
</dbReference>
<dbReference type="CDD" id="cd08173">
    <property type="entry name" value="Gro1PDH"/>
    <property type="match status" value="1"/>
</dbReference>
<dbReference type="Gene3D" id="3.40.50.1970">
    <property type="match status" value="1"/>
</dbReference>
<dbReference type="Gene3D" id="1.20.1090.10">
    <property type="entry name" value="Dehydroquinate synthase-like - alpha domain"/>
    <property type="match status" value="1"/>
</dbReference>
<dbReference type="HAMAP" id="MF_00497_A">
    <property type="entry name" value="G1P_dehydrogenase_A"/>
    <property type="match status" value="1"/>
</dbReference>
<dbReference type="InterPro" id="IPR023002">
    <property type="entry name" value="G1P_dehydrogenase_arc"/>
</dbReference>
<dbReference type="InterPro" id="IPR032837">
    <property type="entry name" value="G1PDH"/>
</dbReference>
<dbReference type="InterPro" id="IPR016205">
    <property type="entry name" value="Glycerol_DH"/>
</dbReference>
<dbReference type="NCBIfam" id="NF002022">
    <property type="entry name" value="PRK00843.1"/>
    <property type="match status" value="1"/>
</dbReference>
<dbReference type="PANTHER" id="PTHR43616">
    <property type="entry name" value="GLYCEROL DEHYDROGENASE"/>
    <property type="match status" value="1"/>
</dbReference>
<dbReference type="PANTHER" id="PTHR43616:SF5">
    <property type="entry name" value="GLYCEROL DEHYDROGENASE 1"/>
    <property type="match status" value="1"/>
</dbReference>
<dbReference type="Pfam" id="PF13685">
    <property type="entry name" value="Fe-ADH_2"/>
    <property type="match status" value="1"/>
</dbReference>
<dbReference type="PIRSF" id="PIRSF000112">
    <property type="entry name" value="Glycerol_dehydrogenase"/>
    <property type="match status" value="1"/>
</dbReference>
<dbReference type="SUPFAM" id="SSF56796">
    <property type="entry name" value="Dehydroquinate synthase-like"/>
    <property type="match status" value="1"/>
</dbReference>
<comment type="function">
    <text evidence="1">Catalyzes the NAD(P)H-dependent reduction of dihydroxyacetonephosphate (DHAP or glycerone phosphate) to glycerol 1-phosphate (G1P). The G1P thus generated is used as the glycerophosphate backbone of phospholipids in the cellular membranes of Archaea.</text>
</comment>
<comment type="catalytic activity">
    <reaction evidence="1">
        <text>sn-glycerol 1-phosphate + NAD(+) = dihydroxyacetone phosphate + NADH + H(+)</text>
        <dbReference type="Rhea" id="RHEA:21412"/>
        <dbReference type="ChEBI" id="CHEBI:15378"/>
        <dbReference type="ChEBI" id="CHEBI:57540"/>
        <dbReference type="ChEBI" id="CHEBI:57642"/>
        <dbReference type="ChEBI" id="CHEBI:57685"/>
        <dbReference type="ChEBI" id="CHEBI:57945"/>
        <dbReference type="EC" id="1.1.1.261"/>
    </reaction>
</comment>
<comment type="catalytic activity">
    <reaction evidence="1">
        <text>sn-glycerol 1-phosphate + NADP(+) = dihydroxyacetone phosphate + NADPH + H(+)</text>
        <dbReference type="Rhea" id="RHEA:21416"/>
        <dbReference type="ChEBI" id="CHEBI:15378"/>
        <dbReference type="ChEBI" id="CHEBI:57642"/>
        <dbReference type="ChEBI" id="CHEBI:57685"/>
        <dbReference type="ChEBI" id="CHEBI:57783"/>
        <dbReference type="ChEBI" id="CHEBI:58349"/>
        <dbReference type="EC" id="1.1.1.261"/>
    </reaction>
</comment>
<comment type="cofactor">
    <cofactor evidence="1">
        <name>Zn(2+)</name>
        <dbReference type="ChEBI" id="CHEBI:29105"/>
    </cofactor>
    <text evidence="1">Binds 1 zinc ion per subunit.</text>
</comment>
<comment type="pathway">
    <text evidence="1">Membrane lipid metabolism; glycerophospholipid metabolism.</text>
</comment>
<comment type="subcellular location">
    <subcellularLocation>
        <location evidence="1">Cytoplasm</location>
    </subcellularLocation>
</comment>
<comment type="similarity">
    <text evidence="1">Belongs to the glycerol-1-phosphate dehydrogenase family.</text>
</comment>
<gene>
    <name evidence="1" type="primary">egsA</name>
    <name type="ordered locus">HQ_1560A</name>
</gene>
<accession>Q18JW6</accession>
<feature type="chain" id="PRO_1000050601" description="Glycerol-1-phosphate dehydrogenase [NAD(P)+]">
    <location>
        <begin position="1"/>
        <end position="348"/>
    </location>
</feature>
<feature type="binding site" evidence="1">
    <location>
        <begin position="94"/>
        <end position="98"/>
    </location>
    <ligand>
        <name>NAD(+)</name>
        <dbReference type="ChEBI" id="CHEBI:57540"/>
    </ligand>
</feature>
<feature type="binding site" evidence="1">
    <location>
        <begin position="116"/>
        <end position="119"/>
    </location>
    <ligand>
        <name>NAD(+)</name>
        <dbReference type="ChEBI" id="CHEBI:57540"/>
    </ligand>
</feature>
<feature type="binding site" evidence="1">
    <location>
        <position position="121"/>
    </location>
    <ligand>
        <name>substrate</name>
    </ligand>
</feature>
<feature type="binding site" evidence="1">
    <location>
        <position position="125"/>
    </location>
    <ligand>
        <name>NAD(+)</name>
        <dbReference type="ChEBI" id="CHEBI:57540"/>
    </ligand>
</feature>
<feature type="binding site" evidence="1">
    <location>
        <position position="168"/>
    </location>
    <ligand>
        <name>substrate</name>
    </ligand>
</feature>
<feature type="binding site" evidence="1">
    <location>
        <position position="168"/>
    </location>
    <ligand>
        <name>Zn(2+)</name>
        <dbReference type="ChEBI" id="CHEBI:29105"/>
        <note>catalytic</note>
    </ligand>
</feature>
<feature type="binding site" evidence="1">
    <location>
        <position position="248"/>
    </location>
    <ligand>
        <name>Zn(2+)</name>
        <dbReference type="ChEBI" id="CHEBI:29105"/>
        <note>catalytic</note>
    </ligand>
</feature>
<feature type="binding site" evidence="1">
    <location>
        <position position="252"/>
    </location>
    <ligand>
        <name>substrate</name>
    </ligand>
</feature>
<feature type="binding site" evidence="1">
    <location>
        <position position="264"/>
    </location>
    <ligand>
        <name>Zn(2+)</name>
        <dbReference type="ChEBI" id="CHEBI:29105"/>
        <note>catalytic</note>
    </ligand>
</feature>
<proteinExistence type="inferred from homology"/>
<organism>
    <name type="scientific">Haloquadratum walsbyi (strain DSM 16790 / HBSQ001)</name>
    <dbReference type="NCBI Taxonomy" id="362976"/>
    <lineage>
        <taxon>Archaea</taxon>
        <taxon>Methanobacteriati</taxon>
        <taxon>Methanobacteriota</taxon>
        <taxon>Stenosarchaea group</taxon>
        <taxon>Halobacteria</taxon>
        <taxon>Halobacteriales</taxon>
        <taxon>Haloferacaceae</taxon>
        <taxon>Haloquadratum</taxon>
    </lineage>
</organism>
<protein>
    <recommendedName>
        <fullName evidence="1">Glycerol-1-phosphate dehydrogenase [NAD(P)+]</fullName>
        <shortName evidence="1">G1P dehydrogenase</shortName>
        <shortName evidence="1">G1PDH</shortName>
        <ecNumber evidence="1">1.1.1.261</ecNumber>
    </recommendedName>
    <alternativeName>
        <fullName evidence="1">Enantiomeric glycerophosphate synthase</fullName>
    </alternativeName>
    <alternativeName>
        <fullName evidence="1">sn-glycerol-1-phosphate dehydrogenase</fullName>
    </alternativeName>
</protein>
<reference key="1">
    <citation type="journal article" date="2006" name="BMC Genomics">
        <title>The genome of the square archaeon Haloquadratum walsbyi: life at the limits of water activity.</title>
        <authorList>
            <person name="Bolhuis H."/>
            <person name="Palm P."/>
            <person name="Wende A."/>
            <person name="Falb M."/>
            <person name="Rampp M."/>
            <person name="Rodriguez-Valera F."/>
            <person name="Pfeiffer F."/>
            <person name="Oesterhelt D."/>
        </authorList>
    </citation>
    <scope>NUCLEOTIDE SEQUENCE [LARGE SCALE GENOMIC DNA]</scope>
    <source>
        <strain>DSM 16790 / HBSQ001</strain>
    </source>
</reference>